<reference key="1">
    <citation type="submission" date="2006-10" db="EMBL/GenBank/DDBJ databases">
        <authorList>
            <consortium name="Sanger Xenopus tropicalis EST/cDNA project"/>
        </authorList>
    </citation>
    <scope>NUCLEOTIDE SEQUENCE [LARGE SCALE MRNA]</scope>
    <source>
        <tissue>Gastrula</tissue>
    </source>
</reference>
<protein>
    <recommendedName>
        <fullName>Vacuolar fusion protein CCZ1 homolog</fullName>
    </recommendedName>
</protein>
<feature type="chain" id="PRO_0000327404" description="Vacuolar fusion protein CCZ1 homolog">
    <location>
        <begin position="1"/>
        <end position="471"/>
    </location>
</feature>
<evidence type="ECO:0000250" key="1"/>
<evidence type="ECO:0000305" key="2"/>
<keyword id="KW-0458">Lysosome</keyword>
<keyword id="KW-0472">Membrane</keyword>
<keyword id="KW-1185">Reference proteome</keyword>
<organism>
    <name type="scientific">Xenopus tropicalis</name>
    <name type="common">Western clawed frog</name>
    <name type="synonym">Silurana tropicalis</name>
    <dbReference type="NCBI Taxonomy" id="8364"/>
    <lineage>
        <taxon>Eukaryota</taxon>
        <taxon>Metazoa</taxon>
        <taxon>Chordata</taxon>
        <taxon>Craniata</taxon>
        <taxon>Vertebrata</taxon>
        <taxon>Euteleostomi</taxon>
        <taxon>Amphibia</taxon>
        <taxon>Batrachia</taxon>
        <taxon>Anura</taxon>
        <taxon>Pipoidea</taxon>
        <taxon>Pipidae</taxon>
        <taxon>Xenopodinae</taxon>
        <taxon>Xenopus</taxon>
        <taxon>Silurana</taxon>
    </lineage>
</organism>
<dbReference type="EMBL" id="CR760737">
    <property type="protein sequence ID" value="CAJ83427.1"/>
    <property type="molecule type" value="mRNA"/>
</dbReference>
<dbReference type="SMR" id="Q28HU2"/>
<dbReference type="FunCoup" id="Q28HU2">
    <property type="interactions" value="4106"/>
</dbReference>
<dbReference type="STRING" id="8364.ENSXETP00000041039"/>
<dbReference type="PaxDb" id="8364-ENSXETP00000058579"/>
<dbReference type="AGR" id="Xenbase:XB-GENE-941313"/>
<dbReference type="eggNOG" id="KOG2622">
    <property type="taxonomic scope" value="Eukaryota"/>
</dbReference>
<dbReference type="InParanoid" id="Q28HU2"/>
<dbReference type="Proteomes" id="UP000008143">
    <property type="component" value="Unplaced"/>
</dbReference>
<dbReference type="GO" id="GO:0005765">
    <property type="term" value="C:lysosomal membrane"/>
    <property type="evidence" value="ECO:0007669"/>
    <property type="project" value="UniProtKB-SubCell"/>
</dbReference>
<dbReference type="GO" id="GO:0035658">
    <property type="term" value="C:Mon1-Ccz1 complex"/>
    <property type="evidence" value="ECO:0007669"/>
    <property type="project" value="InterPro"/>
</dbReference>
<dbReference type="GO" id="GO:0016192">
    <property type="term" value="P:vesicle-mediated transport"/>
    <property type="evidence" value="ECO:0007669"/>
    <property type="project" value="InterPro"/>
</dbReference>
<dbReference type="InterPro" id="IPR013176">
    <property type="entry name" value="Ccz1"/>
</dbReference>
<dbReference type="InterPro" id="IPR043987">
    <property type="entry name" value="CCZ1/INTU/HSP4_longin_1"/>
</dbReference>
<dbReference type="InterPro" id="IPR043989">
    <property type="entry name" value="CCZ1/INTU/HSP4_longin_3"/>
</dbReference>
<dbReference type="InterPro" id="IPR043988">
    <property type="entry name" value="CCZ1/INTU_longin_2"/>
</dbReference>
<dbReference type="PANTHER" id="PTHR13056">
    <property type="entry name" value="VACUOLAR FUSION PROTEIN CCZ1 HOMOLOG-RELATED"/>
    <property type="match status" value="1"/>
</dbReference>
<dbReference type="PANTHER" id="PTHR13056:SF0">
    <property type="entry name" value="VACUOLAR FUSION PROTEIN CCZ1 HOMOLOG-RELATED"/>
    <property type="match status" value="1"/>
</dbReference>
<dbReference type="Pfam" id="PF19031">
    <property type="entry name" value="Intu_longin_1"/>
    <property type="match status" value="1"/>
</dbReference>
<dbReference type="Pfam" id="PF19032">
    <property type="entry name" value="Intu_longin_2"/>
    <property type="match status" value="1"/>
</dbReference>
<dbReference type="Pfam" id="PF19033">
    <property type="entry name" value="Intu_longin_3"/>
    <property type="match status" value="1"/>
</dbReference>
<sequence length="471" mass="55218">MAYAVQDKRFAPSLLSFFIYNPKFGPREGEEEKKILFYHPNEVEKNEKIRNVGLCEAIVQFTRTFNPTKPAKSLHTQKNRQFFHEPEEGFWMVMVVKNPLAEKQKEGKTVLEYQEDELLDKVYSSVLQQCYRMYKLFNGTFSRAMEVGQVELLKDRLEKFFHRYLQTLHLHSCDLLDVFGGISFFPLDKMTYLKIQSFINRIEESLNIVKYTVFLYNDQLIWSGLEQEDMRILYKYLTTTLFPRYTEPELAGRDSPIRPEMPGNLQHYGRFLTGPLNLSDPEVKFRFPKIFVNTEDSYEELYLIVYKAMSASVCFMIDASVQLTVDFCRKLDSLVGPQLTVLASDICEQFNINRRISGSEKEPQFKFIYFNHMNLAEKSTIHLRKTPSMSLTSVQPELMKILGDINGDFTRVDEDEEIIVKAMSDYWVVGKKSDQRELYVILNQKNSNLIEVNEEIKKLCATQFSNIFFLD</sequence>
<name>CCZ1_XENTR</name>
<comment type="subcellular location">
    <subcellularLocation>
        <location evidence="1">Lysosome membrane</location>
    </subcellularLocation>
</comment>
<comment type="similarity">
    <text evidence="2">Belongs to the CCZ1 family.</text>
</comment>
<accession>Q28HU2</accession>
<gene>
    <name type="primary">ccz1</name>
    <name type="ORF">TGas077n04.1</name>
</gene>
<proteinExistence type="evidence at transcript level"/>